<evidence type="ECO:0000250" key="1"/>
<evidence type="ECO:0000250" key="2">
    <source>
        <dbReference type="UniProtKB" id="Q13813"/>
    </source>
</evidence>
<evidence type="ECO:0000255" key="3"/>
<evidence type="ECO:0000305" key="4"/>
<reference key="1">
    <citation type="journal article" date="2010" name="J. Cell. Biochem.">
        <title>Cytoplasmic gamma-tubulin complex from brain contains nonerythroid spectrin.</title>
        <authorList>
            <person name="Thomas N.E."/>
            <person name="Shashikala S."/>
            <person name="Sengupta S."/>
        </authorList>
    </citation>
    <scope>PROTEIN SEQUENCE</scope>
    <scope>SUBUNIT</scope>
    <source>
        <tissue>Brain</tissue>
    </source>
</reference>
<protein>
    <recommendedName>
        <fullName>Spectrin alpha chain, non-erythrocytic 1</fullName>
    </recommendedName>
    <alternativeName>
        <fullName evidence="2">Alpha-II spectrin</fullName>
    </alternativeName>
    <alternativeName>
        <fullName evidence="2">Fodrin alpha chain</fullName>
    </alternativeName>
</protein>
<gene>
    <name type="primary">SPTAN1</name>
</gene>
<comment type="function">
    <text evidence="2">Fodrin, which seems to be involved in secretion, interacts with calmodulin in a calcium-dependent manner and is thus candidate for the calcium-dependent movement of the cytoskeleton at the membrane.</text>
</comment>
<comment type="subunit">
    <text evidence="1 2">Associates with the gamma-tubulin complex in brain, but not in kidney, liver, sperm, or uterus. Like erythrocyte spectrin, the spectrin-like proteins are capable of forming dimers which can further associate to tetramers. Interacts with isoform 1 of ACP1. Interacts with CALM and EMD (By similarity). Interacts (via C-terminal spectrin repeats) with TRPC4 (By similarity). Identified in a complex with ACTN4, CASK, IQGAP1, MAGI2, NPHS1 and SPTBN1 (By similarity). Interacts with CLN3; this interaction regulates the fodrin localization at the plasma membrane (By similarity).</text>
</comment>
<comment type="subcellular location">
    <subcellularLocation>
        <location evidence="2">Cytoplasm</location>
        <location evidence="2">Cytoskeleton</location>
    </subcellularLocation>
    <subcellularLocation>
        <location evidence="2">Cytoplasm</location>
        <location evidence="2">Cell cortex</location>
    </subcellularLocation>
    <text evidence="1">Expressed along the cell membrane in podocytes and presumptive tubule cells during glomerulogenesis and is expressed along lateral cell margins in tubule cells.</text>
</comment>
<comment type="similarity">
    <text evidence="3">Belongs to the spectrin family.</text>
</comment>
<accession>P85985</accession>
<sequence>AQLADSFHLQQFFRSQLLGSAHEVQRLAQFVEHWKKVEDLFLTFAK</sequence>
<dbReference type="SMR" id="P85985"/>
<dbReference type="Proteomes" id="UP000291000">
    <property type="component" value="Unassembled WGS sequence"/>
</dbReference>
<dbReference type="Proteomes" id="UP000694566">
    <property type="component" value="Unplaced"/>
</dbReference>
<dbReference type="GO" id="GO:0005938">
    <property type="term" value="C:cell cortex"/>
    <property type="evidence" value="ECO:0007669"/>
    <property type="project" value="UniProtKB-SubCell"/>
</dbReference>
<dbReference type="GO" id="GO:0005856">
    <property type="term" value="C:cytoskeleton"/>
    <property type="evidence" value="ECO:0007669"/>
    <property type="project" value="UniProtKB-SubCell"/>
</dbReference>
<dbReference type="GO" id="GO:0003779">
    <property type="term" value="F:actin binding"/>
    <property type="evidence" value="ECO:0007669"/>
    <property type="project" value="UniProtKB-KW"/>
</dbReference>
<dbReference type="GO" id="GO:0005516">
    <property type="term" value="F:calmodulin binding"/>
    <property type="evidence" value="ECO:0007669"/>
    <property type="project" value="UniProtKB-KW"/>
</dbReference>
<dbReference type="GO" id="GO:0051693">
    <property type="term" value="P:actin filament capping"/>
    <property type="evidence" value="ECO:0007669"/>
    <property type="project" value="UniProtKB-KW"/>
</dbReference>
<feature type="chain" id="PRO_0000349155" description="Spectrin alpha chain, non-erythrocytic 1">
    <location>
        <begin position="1" status="less than"/>
        <end position="46" status="greater than"/>
    </location>
</feature>
<feature type="repeat" description="Spectrin 6" evidence="2">
    <location>
        <begin position="1" status="less than"/>
        <end position="5"/>
    </location>
</feature>
<feature type="repeat" description="Spectrin 7" evidence="2">
    <location>
        <begin position="7"/>
        <end position="14" status="greater than"/>
    </location>
</feature>
<feature type="repeat" description="Spectrin 13" evidence="2">
    <location>
        <begin position="15" status="less than"/>
        <end position="20"/>
    </location>
</feature>
<feature type="repeat" description="Spectrin 14" evidence="2">
    <location>
        <begin position="21"/>
        <end position="26" status="greater than"/>
    </location>
</feature>
<feature type="repeat" description="Spectrin 19" evidence="2">
    <location>
        <begin position="27" status="less than"/>
        <end position="35" status="greater than"/>
    </location>
</feature>
<feature type="repeat" description="Spectrin 22" evidence="2">
    <location>
        <begin position="39"/>
        <end position="46" status="greater than"/>
    </location>
</feature>
<feature type="non-consecutive residues" evidence="4">
    <location>
        <begin position="14"/>
        <end position="15"/>
    </location>
</feature>
<feature type="non-consecutive residues" evidence="4">
    <location>
        <begin position="26"/>
        <end position="27"/>
    </location>
</feature>
<feature type="non-consecutive residues" evidence="4">
    <location>
        <begin position="35"/>
        <end position="36"/>
    </location>
</feature>
<feature type="non-terminal residue">
    <location>
        <position position="1"/>
    </location>
</feature>
<feature type="non-terminal residue">
    <location>
        <position position="46"/>
    </location>
</feature>
<proteinExistence type="evidence at protein level"/>
<organism>
    <name type="scientific">Capra hircus</name>
    <name type="common">Goat</name>
    <dbReference type="NCBI Taxonomy" id="9925"/>
    <lineage>
        <taxon>Eukaryota</taxon>
        <taxon>Metazoa</taxon>
        <taxon>Chordata</taxon>
        <taxon>Craniata</taxon>
        <taxon>Vertebrata</taxon>
        <taxon>Euteleostomi</taxon>
        <taxon>Mammalia</taxon>
        <taxon>Eutheria</taxon>
        <taxon>Laurasiatheria</taxon>
        <taxon>Artiodactyla</taxon>
        <taxon>Ruminantia</taxon>
        <taxon>Pecora</taxon>
        <taxon>Bovidae</taxon>
        <taxon>Caprinae</taxon>
        <taxon>Capra</taxon>
    </lineage>
</organism>
<keyword id="KW-0117">Actin capping</keyword>
<keyword id="KW-0009">Actin-binding</keyword>
<keyword id="KW-0106">Calcium</keyword>
<keyword id="KW-0112">Calmodulin-binding</keyword>
<keyword id="KW-0963">Cytoplasm</keyword>
<keyword id="KW-0206">Cytoskeleton</keyword>
<keyword id="KW-0903">Direct protein sequencing</keyword>
<keyword id="KW-1185">Reference proteome</keyword>
<keyword id="KW-0677">Repeat</keyword>
<name>SPTN1_CAPHI</name>